<dbReference type="EMBL" id="CP000767">
    <property type="protein sequence ID" value="EAT99713.1"/>
    <property type="molecule type" value="Genomic_DNA"/>
</dbReference>
<dbReference type="RefSeq" id="WP_009649813.1">
    <property type="nucleotide sequence ID" value="NC_009715.2"/>
</dbReference>
<dbReference type="SMR" id="A7GVX9"/>
<dbReference type="STRING" id="360105.CCV52592_0346"/>
<dbReference type="GeneID" id="61001356"/>
<dbReference type="KEGG" id="ccv:CCV52592_0346"/>
<dbReference type="HOGENOM" id="CLU_169643_1_2_7"/>
<dbReference type="OrthoDB" id="9804851at2"/>
<dbReference type="Proteomes" id="UP000006380">
    <property type="component" value="Chromosome"/>
</dbReference>
<dbReference type="GO" id="GO:0022625">
    <property type="term" value="C:cytosolic large ribosomal subunit"/>
    <property type="evidence" value="ECO:0007669"/>
    <property type="project" value="TreeGrafter"/>
</dbReference>
<dbReference type="GO" id="GO:0003735">
    <property type="term" value="F:structural constituent of ribosome"/>
    <property type="evidence" value="ECO:0007669"/>
    <property type="project" value="InterPro"/>
</dbReference>
<dbReference type="GO" id="GO:0006412">
    <property type="term" value="P:translation"/>
    <property type="evidence" value="ECO:0007669"/>
    <property type="project" value="UniProtKB-UniRule"/>
</dbReference>
<dbReference type="FunFam" id="4.10.410.60:FF:000001">
    <property type="entry name" value="50S ribosomal protein L35"/>
    <property type="match status" value="1"/>
</dbReference>
<dbReference type="Gene3D" id="4.10.410.60">
    <property type="match status" value="1"/>
</dbReference>
<dbReference type="HAMAP" id="MF_00514">
    <property type="entry name" value="Ribosomal_bL35"/>
    <property type="match status" value="1"/>
</dbReference>
<dbReference type="InterPro" id="IPR001706">
    <property type="entry name" value="Ribosomal_bL35"/>
</dbReference>
<dbReference type="InterPro" id="IPR021137">
    <property type="entry name" value="Ribosomal_bL35-like"/>
</dbReference>
<dbReference type="InterPro" id="IPR018265">
    <property type="entry name" value="Ribosomal_bL35_CS"/>
</dbReference>
<dbReference type="InterPro" id="IPR037229">
    <property type="entry name" value="Ribosomal_bL35_sf"/>
</dbReference>
<dbReference type="NCBIfam" id="TIGR00001">
    <property type="entry name" value="rpmI_bact"/>
    <property type="match status" value="1"/>
</dbReference>
<dbReference type="PANTHER" id="PTHR33343">
    <property type="entry name" value="54S RIBOSOMAL PROTEIN BL35M"/>
    <property type="match status" value="1"/>
</dbReference>
<dbReference type="PANTHER" id="PTHR33343:SF1">
    <property type="entry name" value="LARGE RIBOSOMAL SUBUNIT PROTEIN BL35M"/>
    <property type="match status" value="1"/>
</dbReference>
<dbReference type="Pfam" id="PF01632">
    <property type="entry name" value="Ribosomal_L35p"/>
    <property type="match status" value="1"/>
</dbReference>
<dbReference type="PRINTS" id="PR00064">
    <property type="entry name" value="RIBOSOMALL35"/>
</dbReference>
<dbReference type="SUPFAM" id="SSF143034">
    <property type="entry name" value="L35p-like"/>
    <property type="match status" value="1"/>
</dbReference>
<dbReference type="PROSITE" id="PS00936">
    <property type="entry name" value="RIBOSOMAL_L35"/>
    <property type="match status" value="1"/>
</dbReference>
<feature type="chain" id="PRO_1000050673" description="Large ribosomal subunit protein bL35">
    <location>
        <begin position="1"/>
        <end position="63"/>
    </location>
</feature>
<accession>A7GVX9</accession>
<gene>
    <name evidence="1" type="primary">rpmI</name>
    <name type="ordered locus">Ccur92_00670</name>
    <name type="ORF">CCV52592_0346</name>
</gene>
<evidence type="ECO:0000255" key="1">
    <source>
        <dbReference type="HAMAP-Rule" id="MF_00514"/>
    </source>
</evidence>
<evidence type="ECO:0000305" key="2"/>
<protein>
    <recommendedName>
        <fullName evidence="1">Large ribosomal subunit protein bL35</fullName>
    </recommendedName>
    <alternativeName>
        <fullName evidence="2">50S ribosomal protein L35</fullName>
    </alternativeName>
</protein>
<reference key="1">
    <citation type="submission" date="2007-07" db="EMBL/GenBank/DDBJ databases">
        <title>Genome sequence of Campylobacter curvus 525.92 isolated from human feces.</title>
        <authorList>
            <person name="Fouts D.E."/>
            <person name="Mongodin E.F."/>
            <person name="Puiu D."/>
            <person name="Sebastian Y."/>
            <person name="Miller W.G."/>
            <person name="Mandrell R.E."/>
            <person name="Lastovica A.J."/>
            <person name="Nelson K.E."/>
        </authorList>
    </citation>
    <scope>NUCLEOTIDE SEQUENCE [LARGE SCALE GENOMIC DNA]</scope>
    <source>
        <strain>525.92</strain>
    </source>
</reference>
<sequence length="63" mass="7095">MPKMKTVRGAAKRFKVGKNKIKRGSAFRSHILTKKPSKRMRDLRGPHYVDGTNVSAVKKMLGV</sequence>
<proteinExistence type="inferred from homology"/>
<comment type="similarity">
    <text evidence="1">Belongs to the bacterial ribosomal protein bL35 family.</text>
</comment>
<name>RL35_CAMC5</name>
<keyword id="KW-1185">Reference proteome</keyword>
<keyword id="KW-0687">Ribonucleoprotein</keyword>
<keyword id="KW-0689">Ribosomal protein</keyword>
<organism>
    <name type="scientific">Campylobacter curvus (strain 525.92)</name>
    <dbReference type="NCBI Taxonomy" id="360105"/>
    <lineage>
        <taxon>Bacteria</taxon>
        <taxon>Pseudomonadati</taxon>
        <taxon>Campylobacterota</taxon>
        <taxon>Epsilonproteobacteria</taxon>
        <taxon>Campylobacterales</taxon>
        <taxon>Campylobacteraceae</taxon>
        <taxon>Campylobacter</taxon>
    </lineage>
</organism>